<sequence>MRINEHSIQSLPKEERPRERLIRHGADSLSLIEILAIILGSGSKVASVLEVSRALVTRFGGLEALMQATLTELLEVQGIGFAKAIQLKAALNLGFRATRQQIKSRYLIEHSSHAYQLVKDELENENREIFMAIFQDTKGYLITYEVISIGSLSQTLVHPREVFYSAIRHKAASLIVVHNHPSGDPMPSNQDLKLTQILLEGSRLLGIPLRDHLIIGKNSYVSFKDQNLLLK</sequence>
<accession>Q6MAB0</accession>
<protein>
    <recommendedName>
        <fullName>UPF0758 protein pc1765</fullName>
    </recommendedName>
</protein>
<proteinExistence type="inferred from homology"/>
<evidence type="ECO:0000255" key="1">
    <source>
        <dbReference type="PROSITE-ProRule" id="PRU01182"/>
    </source>
</evidence>
<evidence type="ECO:0000305" key="2"/>
<keyword id="KW-0378">Hydrolase</keyword>
<keyword id="KW-0479">Metal-binding</keyword>
<keyword id="KW-0482">Metalloprotease</keyword>
<keyword id="KW-0645">Protease</keyword>
<keyword id="KW-1185">Reference proteome</keyword>
<keyword id="KW-0862">Zinc</keyword>
<dbReference type="EMBL" id="BX908798">
    <property type="protein sequence ID" value="CAF24489.1"/>
    <property type="molecule type" value="Genomic_DNA"/>
</dbReference>
<dbReference type="RefSeq" id="WP_011176310.1">
    <property type="nucleotide sequence ID" value="NC_005861.2"/>
</dbReference>
<dbReference type="SMR" id="Q6MAB0"/>
<dbReference type="STRING" id="264201.pc1765"/>
<dbReference type="KEGG" id="pcu:PC_RS08455"/>
<dbReference type="eggNOG" id="COG2003">
    <property type="taxonomic scope" value="Bacteria"/>
</dbReference>
<dbReference type="HOGENOM" id="CLU_073529_0_2_0"/>
<dbReference type="OrthoDB" id="9804482at2"/>
<dbReference type="Proteomes" id="UP000000529">
    <property type="component" value="Chromosome"/>
</dbReference>
<dbReference type="GO" id="GO:0046872">
    <property type="term" value="F:metal ion binding"/>
    <property type="evidence" value="ECO:0007669"/>
    <property type="project" value="UniProtKB-KW"/>
</dbReference>
<dbReference type="GO" id="GO:0008237">
    <property type="term" value="F:metallopeptidase activity"/>
    <property type="evidence" value="ECO:0007669"/>
    <property type="project" value="UniProtKB-KW"/>
</dbReference>
<dbReference type="GO" id="GO:0006508">
    <property type="term" value="P:proteolysis"/>
    <property type="evidence" value="ECO:0007669"/>
    <property type="project" value="UniProtKB-KW"/>
</dbReference>
<dbReference type="CDD" id="cd08071">
    <property type="entry name" value="MPN_DUF2466"/>
    <property type="match status" value="1"/>
</dbReference>
<dbReference type="Gene3D" id="1.10.150.20">
    <property type="entry name" value="5' to 3' exonuclease, C-terminal subdomain"/>
    <property type="match status" value="1"/>
</dbReference>
<dbReference type="Gene3D" id="3.40.140.10">
    <property type="entry name" value="Cytidine Deaminase, domain 2"/>
    <property type="match status" value="1"/>
</dbReference>
<dbReference type="InterPro" id="IPR037518">
    <property type="entry name" value="MPN"/>
</dbReference>
<dbReference type="InterPro" id="IPR025657">
    <property type="entry name" value="RadC_JAB"/>
</dbReference>
<dbReference type="InterPro" id="IPR010994">
    <property type="entry name" value="RuvA_2-like"/>
</dbReference>
<dbReference type="InterPro" id="IPR001405">
    <property type="entry name" value="UPF0758"/>
</dbReference>
<dbReference type="InterPro" id="IPR020891">
    <property type="entry name" value="UPF0758_CS"/>
</dbReference>
<dbReference type="InterPro" id="IPR046778">
    <property type="entry name" value="UPF0758_N"/>
</dbReference>
<dbReference type="NCBIfam" id="NF000642">
    <property type="entry name" value="PRK00024.1"/>
    <property type="match status" value="1"/>
</dbReference>
<dbReference type="NCBIfam" id="TIGR00608">
    <property type="entry name" value="radc"/>
    <property type="match status" value="1"/>
</dbReference>
<dbReference type="PANTHER" id="PTHR30471">
    <property type="entry name" value="DNA REPAIR PROTEIN RADC"/>
    <property type="match status" value="1"/>
</dbReference>
<dbReference type="PANTHER" id="PTHR30471:SF3">
    <property type="entry name" value="UPF0758 PROTEIN YEES-RELATED"/>
    <property type="match status" value="1"/>
</dbReference>
<dbReference type="Pfam" id="PF04002">
    <property type="entry name" value="RadC"/>
    <property type="match status" value="1"/>
</dbReference>
<dbReference type="Pfam" id="PF20582">
    <property type="entry name" value="UPF0758_N"/>
    <property type="match status" value="1"/>
</dbReference>
<dbReference type="SUPFAM" id="SSF47781">
    <property type="entry name" value="RuvA domain 2-like"/>
    <property type="match status" value="1"/>
</dbReference>
<dbReference type="PROSITE" id="PS50249">
    <property type="entry name" value="MPN"/>
    <property type="match status" value="1"/>
</dbReference>
<dbReference type="PROSITE" id="PS01302">
    <property type="entry name" value="UPF0758"/>
    <property type="match status" value="1"/>
</dbReference>
<comment type="similarity">
    <text evidence="2">Belongs to the UPF0758 family.</text>
</comment>
<name>Y1765_PARUW</name>
<gene>
    <name type="ordered locus">pc1765</name>
</gene>
<organism>
    <name type="scientific">Protochlamydia amoebophila (strain UWE25)</name>
    <dbReference type="NCBI Taxonomy" id="264201"/>
    <lineage>
        <taxon>Bacteria</taxon>
        <taxon>Pseudomonadati</taxon>
        <taxon>Chlamydiota</taxon>
        <taxon>Chlamydiia</taxon>
        <taxon>Parachlamydiales</taxon>
        <taxon>Parachlamydiaceae</taxon>
        <taxon>Candidatus Protochlamydia</taxon>
    </lineage>
</organism>
<feature type="chain" id="PRO_1000057163" description="UPF0758 protein pc1765">
    <location>
        <begin position="1"/>
        <end position="231"/>
    </location>
</feature>
<feature type="domain" description="MPN" evidence="1">
    <location>
        <begin position="107"/>
        <end position="229"/>
    </location>
</feature>
<feature type="short sequence motif" description="JAMM motif" evidence="1">
    <location>
        <begin position="178"/>
        <end position="191"/>
    </location>
</feature>
<feature type="binding site" evidence="1">
    <location>
        <position position="178"/>
    </location>
    <ligand>
        <name>Zn(2+)</name>
        <dbReference type="ChEBI" id="CHEBI:29105"/>
        <note>catalytic</note>
    </ligand>
</feature>
<feature type="binding site" evidence="1">
    <location>
        <position position="180"/>
    </location>
    <ligand>
        <name>Zn(2+)</name>
        <dbReference type="ChEBI" id="CHEBI:29105"/>
        <note>catalytic</note>
    </ligand>
</feature>
<feature type="binding site" evidence="1">
    <location>
        <position position="191"/>
    </location>
    <ligand>
        <name>Zn(2+)</name>
        <dbReference type="ChEBI" id="CHEBI:29105"/>
        <note>catalytic</note>
    </ligand>
</feature>
<reference key="1">
    <citation type="journal article" date="2004" name="Science">
        <title>Illuminating the evolutionary history of chlamydiae.</title>
        <authorList>
            <person name="Horn M."/>
            <person name="Collingro A."/>
            <person name="Schmitz-Esser S."/>
            <person name="Beier C.L."/>
            <person name="Purkhold U."/>
            <person name="Fartmann B."/>
            <person name="Brandt P."/>
            <person name="Nyakatura G.J."/>
            <person name="Droege M."/>
            <person name="Frishman D."/>
            <person name="Rattei T."/>
            <person name="Mewes H.-W."/>
            <person name="Wagner M."/>
        </authorList>
    </citation>
    <scope>NUCLEOTIDE SEQUENCE [LARGE SCALE GENOMIC DNA]</scope>
    <source>
        <strain>UWE25</strain>
    </source>
</reference>